<reference key="1">
    <citation type="journal article" date="1996" name="Science">
        <title>Complete genome sequence of the methanogenic archaeon, Methanococcus jannaschii.</title>
        <authorList>
            <person name="Bult C.J."/>
            <person name="White O."/>
            <person name="Olsen G.J."/>
            <person name="Zhou L."/>
            <person name="Fleischmann R.D."/>
            <person name="Sutton G.G."/>
            <person name="Blake J.A."/>
            <person name="FitzGerald L.M."/>
            <person name="Clayton R.A."/>
            <person name="Gocayne J.D."/>
            <person name="Kerlavage A.R."/>
            <person name="Dougherty B.A."/>
            <person name="Tomb J.-F."/>
            <person name="Adams M.D."/>
            <person name="Reich C.I."/>
            <person name="Overbeek R."/>
            <person name="Kirkness E.F."/>
            <person name="Weinstock K.G."/>
            <person name="Merrick J.M."/>
            <person name="Glodek A."/>
            <person name="Scott J.L."/>
            <person name="Geoghagen N.S.M."/>
            <person name="Weidman J.F."/>
            <person name="Fuhrmann J.L."/>
            <person name="Nguyen D."/>
            <person name="Utterback T.R."/>
            <person name="Kelley J.M."/>
            <person name="Peterson J.D."/>
            <person name="Sadow P.W."/>
            <person name="Hanna M.C."/>
            <person name="Cotton M.D."/>
            <person name="Roberts K.M."/>
            <person name="Hurst M.A."/>
            <person name="Kaine B.P."/>
            <person name="Borodovsky M."/>
            <person name="Klenk H.-P."/>
            <person name="Fraser C.M."/>
            <person name="Smith H.O."/>
            <person name="Woese C.R."/>
            <person name="Venter J.C."/>
        </authorList>
    </citation>
    <scope>NUCLEOTIDE SEQUENCE [LARGE SCALE GENOMIC DNA]</scope>
    <source>
        <strain>ATCC 43067 / DSM 2661 / JAL-1 / JCM 10045 / NBRC 100440</strain>
    </source>
</reference>
<sequence length="230" mass="25417">MKIAVTKFLGTNCDLDVCHAVKLAGGEPELVFFTQENLDSYKGAVIPGGFSYGDYLRAGAISARTPIIKGLKKMVEEGKPVLGICNGAQIGLEAGFSKGTLTNNLNAKFICKWVYIRVENNKTPFTQYYKKGEVLKIPIAHAEGRFYADDETLDYMYKNNMIVFKYCDETGEVTEEANPNGSIDNIAGVCNENQNCVLLMPHPERASEKILGSDDGLKMFKGMIDYAKRI</sequence>
<dbReference type="EC" id="6.3.5.3" evidence="1"/>
<dbReference type="EC" id="3.5.1.2" evidence="1"/>
<dbReference type="EMBL" id="L77117">
    <property type="protein sequence ID" value="AAB99669.1"/>
    <property type="molecule type" value="Genomic_DNA"/>
</dbReference>
<dbReference type="PIR" id="F64505">
    <property type="entry name" value="F64505"/>
</dbReference>
<dbReference type="RefSeq" id="WP_010871172.1">
    <property type="nucleotide sequence ID" value="NC_000909.1"/>
</dbReference>
<dbReference type="SMR" id="Q59042"/>
<dbReference type="FunCoup" id="Q59042">
    <property type="interactions" value="21"/>
</dbReference>
<dbReference type="STRING" id="243232.MJ_1648"/>
<dbReference type="PaxDb" id="243232-MJ_1648"/>
<dbReference type="EnsemblBacteria" id="AAB99669">
    <property type="protein sequence ID" value="AAB99669"/>
    <property type="gene ID" value="MJ_1648"/>
</dbReference>
<dbReference type="GeneID" id="1452557"/>
<dbReference type="KEGG" id="mja:MJ_1648"/>
<dbReference type="eggNOG" id="arCOG00102">
    <property type="taxonomic scope" value="Archaea"/>
</dbReference>
<dbReference type="HOGENOM" id="CLU_001031_3_1_2"/>
<dbReference type="InParanoid" id="Q59042"/>
<dbReference type="OrthoDB" id="6486at2157"/>
<dbReference type="PhylomeDB" id="Q59042"/>
<dbReference type="UniPathway" id="UPA00074">
    <property type="reaction ID" value="UER00128"/>
</dbReference>
<dbReference type="Proteomes" id="UP000000805">
    <property type="component" value="Chromosome"/>
</dbReference>
<dbReference type="GO" id="GO:0005737">
    <property type="term" value="C:cytoplasm"/>
    <property type="evidence" value="ECO:0007669"/>
    <property type="project" value="UniProtKB-SubCell"/>
</dbReference>
<dbReference type="GO" id="GO:0005524">
    <property type="term" value="F:ATP binding"/>
    <property type="evidence" value="ECO:0007669"/>
    <property type="project" value="UniProtKB-KW"/>
</dbReference>
<dbReference type="GO" id="GO:0004359">
    <property type="term" value="F:glutaminase activity"/>
    <property type="evidence" value="ECO:0007669"/>
    <property type="project" value="UniProtKB-EC"/>
</dbReference>
<dbReference type="GO" id="GO:0004642">
    <property type="term" value="F:phosphoribosylformylglycinamidine synthase activity"/>
    <property type="evidence" value="ECO:0007669"/>
    <property type="project" value="UniProtKB-UniRule"/>
</dbReference>
<dbReference type="GO" id="GO:0006189">
    <property type="term" value="P:'de novo' IMP biosynthetic process"/>
    <property type="evidence" value="ECO:0007669"/>
    <property type="project" value="UniProtKB-UniRule"/>
</dbReference>
<dbReference type="CDD" id="cd01740">
    <property type="entry name" value="GATase1_FGAR_AT"/>
    <property type="match status" value="1"/>
</dbReference>
<dbReference type="Gene3D" id="3.40.50.880">
    <property type="match status" value="1"/>
</dbReference>
<dbReference type="HAMAP" id="MF_00421">
    <property type="entry name" value="PurQ"/>
    <property type="match status" value="1"/>
</dbReference>
<dbReference type="InterPro" id="IPR029062">
    <property type="entry name" value="Class_I_gatase-like"/>
</dbReference>
<dbReference type="InterPro" id="IPR010075">
    <property type="entry name" value="PRibForGlyAmidine_synth_PurQ"/>
</dbReference>
<dbReference type="NCBIfam" id="TIGR01737">
    <property type="entry name" value="FGAM_synth_I"/>
    <property type="match status" value="1"/>
</dbReference>
<dbReference type="NCBIfam" id="NF002957">
    <property type="entry name" value="PRK03619.1"/>
    <property type="match status" value="1"/>
</dbReference>
<dbReference type="PANTHER" id="PTHR47552">
    <property type="entry name" value="PHOSPHORIBOSYLFORMYLGLYCINAMIDINE SYNTHASE SUBUNIT PURQ"/>
    <property type="match status" value="1"/>
</dbReference>
<dbReference type="PANTHER" id="PTHR47552:SF1">
    <property type="entry name" value="PHOSPHORIBOSYLFORMYLGLYCINAMIDINE SYNTHASE SUBUNIT PURQ"/>
    <property type="match status" value="1"/>
</dbReference>
<dbReference type="Pfam" id="PF13507">
    <property type="entry name" value="GATase_5"/>
    <property type="match status" value="1"/>
</dbReference>
<dbReference type="PIRSF" id="PIRSF001586">
    <property type="entry name" value="FGAM_synth_I"/>
    <property type="match status" value="1"/>
</dbReference>
<dbReference type="SMART" id="SM01211">
    <property type="entry name" value="GATase_5"/>
    <property type="match status" value="1"/>
</dbReference>
<dbReference type="SUPFAM" id="SSF52317">
    <property type="entry name" value="Class I glutamine amidotransferase-like"/>
    <property type="match status" value="1"/>
</dbReference>
<dbReference type="PROSITE" id="PS51273">
    <property type="entry name" value="GATASE_TYPE_1"/>
    <property type="match status" value="1"/>
</dbReference>
<comment type="function">
    <text evidence="1">Part of the phosphoribosylformylglycinamidine synthase complex involved in the purines biosynthetic pathway. Catalyzes the ATP-dependent conversion of formylglycinamide ribonucleotide (FGAR) and glutamine to yield formylglycinamidine ribonucleotide (FGAM) and glutamate. The FGAM synthase complex is composed of three subunits. PurQ produces an ammonia molecule by converting glutamine to glutamate. PurL transfers the ammonia molecule to FGAR to form FGAM in an ATP-dependent manner. PurS interacts with PurQ and PurL and is thought to assist in the transfer of the ammonia molecule from PurQ to PurL.</text>
</comment>
<comment type="catalytic activity">
    <reaction evidence="1">
        <text>N(2)-formyl-N(1)-(5-phospho-beta-D-ribosyl)glycinamide + L-glutamine + ATP + H2O = 2-formamido-N(1)-(5-O-phospho-beta-D-ribosyl)acetamidine + L-glutamate + ADP + phosphate + H(+)</text>
        <dbReference type="Rhea" id="RHEA:17129"/>
        <dbReference type="ChEBI" id="CHEBI:15377"/>
        <dbReference type="ChEBI" id="CHEBI:15378"/>
        <dbReference type="ChEBI" id="CHEBI:29985"/>
        <dbReference type="ChEBI" id="CHEBI:30616"/>
        <dbReference type="ChEBI" id="CHEBI:43474"/>
        <dbReference type="ChEBI" id="CHEBI:58359"/>
        <dbReference type="ChEBI" id="CHEBI:147286"/>
        <dbReference type="ChEBI" id="CHEBI:147287"/>
        <dbReference type="ChEBI" id="CHEBI:456216"/>
        <dbReference type="EC" id="6.3.5.3"/>
    </reaction>
</comment>
<comment type="catalytic activity">
    <reaction evidence="1">
        <text>L-glutamine + H2O = L-glutamate + NH4(+)</text>
        <dbReference type="Rhea" id="RHEA:15889"/>
        <dbReference type="ChEBI" id="CHEBI:15377"/>
        <dbReference type="ChEBI" id="CHEBI:28938"/>
        <dbReference type="ChEBI" id="CHEBI:29985"/>
        <dbReference type="ChEBI" id="CHEBI:58359"/>
        <dbReference type="EC" id="3.5.1.2"/>
    </reaction>
</comment>
<comment type="pathway">
    <text evidence="1">Purine metabolism; IMP biosynthesis via de novo pathway; 5-amino-1-(5-phospho-D-ribosyl)imidazole from N(2)-formyl-N(1)-(5-phospho-D-ribosyl)glycinamide: step 1/2.</text>
</comment>
<comment type="subunit">
    <text evidence="1">Part of the FGAM synthase complex composed of 1 PurL, 1 PurQ and 2 PurS subunits.</text>
</comment>
<comment type="subcellular location">
    <subcellularLocation>
        <location evidence="1">Cytoplasm</location>
    </subcellularLocation>
</comment>
<name>PURQ_METJA</name>
<evidence type="ECO:0000255" key="1">
    <source>
        <dbReference type="HAMAP-Rule" id="MF_00421"/>
    </source>
</evidence>
<gene>
    <name evidence="1" type="primary">purQ</name>
    <name type="ordered locus">MJ1648</name>
</gene>
<proteinExistence type="inferred from homology"/>
<accession>Q59042</accession>
<feature type="chain" id="PRO_0000100608" description="Phosphoribosylformylglycinamidine synthase subunit PurQ">
    <location>
        <begin position="1"/>
        <end position="230"/>
    </location>
</feature>
<feature type="domain" description="Glutamine amidotransferase type-1" evidence="1">
    <location>
        <begin position="2"/>
        <end position="230"/>
    </location>
</feature>
<feature type="active site" description="Nucleophile" evidence="1">
    <location>
        <position position="85"/>
    </location>
</feature>
<feature type="active site" evidence="1">
    <location>
        <position position="202"/>
    </location>
</feature>
<feature type="active site" evidence="1">
    <location>
        <position position="204"/>
    </location>
</feature>
<organism>
    <name type="scientific">Methanocaldococcus jannaschii (strain ATCC 43067 / DSM 2661 / JAL-1 / JCM 10045 / NBRC 100440)</name>
    <name type="common">Methanococcus jannaschii</name>
    <dbReference type="NCBI Taxonomy" id="243232"/>
    <lineage>
        <taxon>Archaea</taxon>
        <taxon>Methanobacteriati</taxon>
        <taxon>Methanobacteriota</taxon>
        <taxon>Methanomada group</taxon>
        <taxon>Methanococci</taxon>
        <taxon>Methanococcales</taxon>
        <taxon>Methanocaldococcaceae</taxon>
        <taxon>Methanocaldococcus</taxon>
    </lineage>
</organism>
<keyword id="KW-0067">ATP-binding</keyword>
<keyword id="KW-0963">Cytoplasm</keyword>
<keyword id="KW-0315">Glutamine amidotransferase</keyword>
<keyword id="KW-0378">Hydrolase</keyword>
<keyword id="KW-0436">Ligase</keyword>
<keyword id="KW-0547">Nucleotide-binding</keyword>
<keyword id="KW-0658">Purine biosynthesis</keyword>
<keyword id="KW-1185">Reference proteome</keyword>
<protein>
    <recommendedName>
        <fullName evidence="1">Phosphoribosylformylglycinamidine synthase subunit PurQ</fullName>
        <shortName evidence="1">FGAM synthase</shortName>
        <ecNumber evidence="1">6.3.5.3</ecNumber>
    </recommendedName>
    <alternativeName>
        <fullName evidence="1">Formylglycinamide ribonucleotide amidotransferase subunit I</fullName>
        <shortName evidence="1">FGAR amidotransferase I</shortName>
        <shortName evidence="1">FGAR-AT I</shortName>
    </alternativeName>
    <alternativeName>
        <fullName evidence="1">Glutaminase PurQ</fullName>
        <ecNumber evidence="1">3.5.1.2</ecNumber>
    </alternativeName>
    <alternativeName>
        <fullName evidence="1">Phosphoribosylformylglycinamidine synthase subunit I</fullName>
    </alternativeName>
</protein>